<proteinExistence type="inferred from homology"/>
<name>RAPZ_YERP3</name>
<organism>
    <name type="scientific">Yersinia pseudotuberculosis serotype O:1b (strain IP 31758)</name>
    <dbReference type="NCBI Taxonomy" id="349747"/>
    <lineage>
        <taxon>Bacteria</taxon>
        <taxon>Pseudomonadati</taxon>
        <taxon>Pseudomonadota</taxon>
        <taxon>Gammaproteobacteria</taxon>
        <taxon>Enterobacterales</taxon>
        <taxon>Yersiniaceae</taxon>
        <taxon>Yersinia</taxon>
    </lineage>
</organism>
<reference key="1">
    <citation type="journal article" date="2007" name="PLoS Genet.">
        <title>The complete genome sequence of Yersinia pseudotuberculosis IP31758, the causative agent of Far East scarlet-like fever.</title>
        <authorList>
            <person name="Eppinger M."/>
            <person name="Rosovitz M.J."/>
            <person name="Fricke W.F."/>
            <person name="Rasko D.A."/>
            <person name="Kokorina G."/>
            <person name="Fayolle C."/>
            <person name="Lindler L.E."/>
            <person name="Carniel E."/>
            <person name="Ravel J."/>
        </authorList>
    </citation>
    <scope>NUCLEOTIDE SEQUENCE [LARGE SCALE GENOMIC DNA]</scope>
    <source>
        <strain>IP 31758</strain>
    </source>
</reference>
<sequence length="284" mass="32533">MVLMIVSGRSGSGKSVALRALEDMGFYCVDNLPVVLLPQLASTLADRNISAAVSIDVRNMPESPEVFEHAMTQLPDSFSPQLLFLDADRNTLIRRYSDTRRLHPLSAKNLSLESAIDEESDLLEPLRSRADLIIDTSEMSVHELAEMLRTRLLGKRERELTMVFESFGFKHGIPIDADYVFDVRFLPNPHWDPKLRPMTGLDKPVISFLDRHTEVHNFIYQTRSYLEQWLPMLETNNRSYLTVAIGCTGGKHRSVYVAEQLADYFRARGKNVQSRHRTLEKRKQ</sequence>
<comment type="function">
    <text evidence="1">Modulates the synthesis of GlmS, by affecting the processing and stability of the regulatory small RNA GlmZ. When glucosamine-6-phosphate (GlcN6P) concentrations are high in the cell, RapZ binds GlmZ and targets it to cleavage by RNase E. Consequently, GlmZ is inactivated and unable to activate GlmS synthesis. Under low GlcN6P concentrations, RapZ is sequestered and inactivated by an other regulatory small RNA, GlmY, preventing GlmZ degradation and leading to synthesis of GlmS.</text>
</comment>
<comment type="subunit">
    <text evidence="1">Homotrimer.</text>
</comment>
<comment type="similarity">
    <text evidence="1">Belongs to the RapZ-like family. RapZ subfamily.</text>
</comment>
<feature type="chain" id="PRO_1000061443" description="RNase adapter protein RapZ">
    <location>
        <begin position="1"/>
        <end position="284"/>
    </location>
</feature>
<feature type="region of interest" description="RNA-binding" evidence="1">
    <location>
        <begin position="266"/>
        <end position="284"/>
    </location>
</feature>
<feature type="binding site" evidence="1">
    <location>
        <begin position="8"/>
        <end position="15"/>
    </location>
    <ligand>
        <name>ATP</name>
        <dbReference type="ChEBI" id="CHEBI:30616"/>
    </ligand>
</feature>
<feature type="binding site" evidence="1">
    <location>
        <begin position="56"/>
        <end position="59"/>
    </location>
    <ligand>
        <name>GTP</name>
        <dbReference type="ChEBI" id="CHEBI:37565"/>
    </ligand>
</feature>
<dbReference type="EMBL" id="CP000720">
    <property type="protein sequence ID" value="ABS46882.1"/>
    <property type="molecule type" value="Genomic_DNA"/>
</dbReference>
<dbReference type="RefSeq" id="WP_002210113.1">
    <property type="nucleotide sequence ID" value="NC_009708.1"/>
</dbReference>
<dbReference type="SMR" id="A7FDV3"/>
<dbReference type="GeneID" id="96663019"/>
<dbReference type="KEGG" id="ypi:YpsIP31758_0438"/>
<dbReference type="HOGENOM" id="CLU_059558_1_1_6"/>
<dbReference type="Proteomes" id="UP000002412">
    <property type="component" value="Chromosome"/>
</dbReference>
<dbReference type="GO" id="GO:0005524">
    <property type="term" value="F:ATP binding"/>
    <property type="evidence" value="ECO:0007669"/>
    <property type="project" value="UniProtKB-UniRule"/>
</dbReference>
<dbReference type="GO" id="GO:0005525">
    <property type="term" value="F:GTP binding"/>
    <property type="evidence" value="ECO:0007669"/>
    <property type="project" value="UniProtKB-UniRule"/>
</dbReference>
<dbReference type="GO" id="GO:0003723">
    <property type="term" value="F:RNA binding"/>
    <property type="evidence" value="ECO:0007669"/>
    <property type="project" value="UniProtKB-KW"/>
</dbReference>
<dbReference type="HAMAP" id="MF_00636">
    <property type="entry name" value="RapZ_like"/>
    <property type="match status" value="1"/>
</dbReference>
<dbReference type="InterPro" id="IPR027417">
    <property type="entry name" value="P-loop_NTPase"/>
</dbReference>
<dbReference type="InterPro" id="IPR005337">
    <property type="entry name" value="RapZ-like"/>
</dbReference>
<dbReference type="InterPro" id="IPR053930">
    <property type="entry name" value="RapZ-like_N"/>
</dbReference>
<dbReference type="InterPro" id="IPR053931">
    <property type="entry name" value="RapZ_C"/>
</dbReference>
<dbReference type="NCBIfam" id="NF003828">
    <property type="entry name" value="PRK05416.1"/>
    <property type="match status" value="1"/>
</dbReference>
<dbReference type="PANTHER" id="PTHR30448">
    <property type="entry name" value="RNASE ADAPTER PROTEIN RAPZ"/>
    <property type="match status" value="1"/>
</dbReference>
<dbReference type="PANTHER" id="PTHR30448:SF0">
    <property type="entry name" value="RNASE ADAPTER PROTEIN RAPZ"/>
    <property type="match status" value="1"/>
</dbReference>
<dbReference type="Pfam" id="PF22740">
    <property type="entry name" value="PapZ_C"/>
    <property type="match status" value="1"/>
</dbReference>
<dbReference type="Pfam" id="PF03668">
    <property type="entry name" value="RapZ-like_N"/>
    <property type="match status" value="1"/>
</dbReference>
<dbReference type="PIRSF" id="PIRSF005052">
    <property type="entry name" value="P-loopkin"/>
    <property type="match status" value="1"/>
</dbReference>
<dbReference type="SUPFAM" id="SSF52540">
    <property type="entry name" value="P-loop containing nucleoside triphosphate hydrolases"/>
    <property type="match status" value="1"/>
</dbReference>
<gene>
    <name evidence="1" type="primary">rapZ</name>
    <name type="ordered locus">YpsIP31758_0438</name>
</gene>
<protein>
    <recommendedName>
        <fullName evidence="1">RNase adapter protein RapZ</fullName>
    </recommendedName>
</protein>
<keyword id="KW-0067">ATP-binding</keyword>
<keyword id="KW-0342">GTP-binding</keyword>
<keyword id="KW-0547">Nucleotide-binding</keyword>
<keyword id="KW-0694">RNA-binding</keyword>
<evidence type="ECO:0000255" key="1">
    <source>
        <dbReference type="HAMAP-Rule" id="MF_00636"/>
    </source>
</evidence>
<accession>A7FDV3</accession>